<reference key="1">
    <citation type="journal article" date="2005" name="Science">
        <title>The transcriptional landscape of the mammalian genome.</title>
        <authorList>
            <person name="Carninci P."/>
            <person name="Kasukawa T."/>
            <person name="Katayama S."/>
            <person name="Gough J."/>
            <person name="Frith M.C."/>
            <person name="Maeda N."/>
            <person name="Oyama R."/>
            <person name="Ravasi T."/>
            <person name="Lenhard B."/>
            <person name="Wells C."/>
            <person name="Kodzius R."/>
            <person name="Shimokawa K."/>
            <person name="Bajic V.B."/>
            <person name="Brenner S.E."/>
            <person name="Batalov S."/>
            <person name="Forrest A.R."/>
            <person name="Zavolan M."/>
            <person name="Davis M.J."/>
            <person name="Wilming L.G."/>
            <person name="Aidinis V."/>
            <person name="Allen J.E."/>
            <person name="Ambesi-Impiombato A."/>
            <person name="Apweiler R."/>
            <person name="Aturaliya R.N."/>
            <person name="Bailey T.L."/>
            <person name="Bansal M."/>
            <person name="Baxter L."/>
            <person name="Beisel K.W."/>
            <person name="Bersano T."/>
            <person name="Bono H."/>
            <person name="Chalk A.M."/>
            <person name="Chiu K.P."/>
            <person name="Choudhary V."/>
            <person name="Christoffels A."/>
            <person name="Clutterbuck D.R."/>
            <person name="Crowe M.L."/>
            <person name="Dalla E."/>
            <person name="Dalrymple B.P."/>
            <person name="de Bono B."/>
            <person name="Della Gatta G."/>
            <person name="di Bernardo D."/>
            <person name="Down T."/>
            <person name="Engstrom P."/>
            <person name="Fagiolini M."/>
            <person name="Faulkner G."/>
            <person name="Fletcher C.F."/>
            <person name="Fukushima T."/>
            <person name="Furuno M."/>
            <person name="Futaki S."/>
            <person name="Gariboldi M."/>
            <person name="Georgii-Hemming P."/>
            <person name="Gingeras T.R."/>
            <person name="Gojobori T."/>
            <person name="Green R.E."/>
            <person name="Gustincich S."/>
            <person name="Harbers M."/>
            <person name="Hayashi Y."/>
            <person name="Hensch T.K."/>
            <person name="Hirokawa N."/>
            <person name="Hill D."/>
            <person name="Huminiecki L."/>
            <person name="Iacono M."/>
            <person name="Ikeo K."/>
            <person name="Iwama A."/>
            <person name="Ishikawa T."/>
            <person name="Jakt M."/>
            <person name="Kanapin A."/>
            <person name="Katoh M."/>
            <person name="Kawasawa Y."/>
            <person name="Kelso J."/>
            <person name="Kitamura H."/>
            <person name="Kitano H."/>
            <person name="Kollias G."/>
            <person name="Krishnan S.P."/>
            <person name="Kruger A."/>
            <person name="Kummerfeld S.K."/>
            <person name="Kurochkin I.V."/>
            <person name="Lareau L.F."/>
            <person name="Lazarevic D."/>
            <person name="Lipovich L."/>
            <person name="Liu J."/>
            <person name="Liuni S."/>
            <person name="McWilliam S."/>
            <person name="Madan Babu M."/>
            <person name="Madera M."/>
            <person name="Marchionni L."/>
            <person name="Matsuda H."/>
            <person name="Matsuzawa S."/>
            <person name="Miki H."/>
            <person name="Mignone F."/>
            <person name="Miyake S."/>
            <person name="Morris K."/>
            <person name="Mottagui-Tabar S."/>
            <person name="Mulder N."/>
            <person name="Nakano N."/>
            <person name="Nakauchi H."/>
            <person name="Ng P."/>
            <person name="Nilsson R."/>
            <person name="Nishiguchi S."/>
            <person name="Nishikawa S."/>
            <person name="Nori F."/>
            <person name="Ohara O."/>
            <person name="Okazaki Y."/>
            <person name="Orlando V."/>
            <person name="Pang K.C."/>
            <person name="Pavan W.J."/>
            <person name="Pavesi G."/>
            <person name="Pesole G."/>
            <person name="Petrovsky N."/>
            <person name="Piazza S."/>
            <person name="Reed J."/>
            <person name="Reid J.F."/>
            <person name="Ring B.Z."/>
            <person name="Ringwald M."/>
            <person name="Rost B."/>
            <person name="Ruan Y."/>
            <person name="Salzberg S.L."/>
            <person name="Sandelin A."/>
            <person name="Schneider C."/>
            <person name="Schoenbach C."/>
            <person name="Sekiguchi K."/>
            <person name="Semple C.A."/>
            <person name="Seno S."/>
            <person name="Sessa L."/>
            <person name="Sheng Y."/>
            <person name="Shibata Y."/>
            <person name="Shimada H."/>
            <person name="Shimada K."/>
            <person name="Silva D."/>
            <person name="Sinclair B."/>
            <person name="Sperling S."/>
            <person name="Stupka E."/>
            <person name="Sugiura K."/>
            <person name="Sultana R."/>
            <person name="Takenaka Y."/>
            <person name="Taki K."/>
            <person name="Tammoja K."/>
            <person name="Tan S.L."/>
            <person name="Tang S."/>
            <person name="Taylor M.S."/>
            <person name="Tegner J."/>
            <person name="Teichmann S.A."/>
            <person name="Ueda H.R."/>
            <person name="van Nimwegen E."/>
            <person name="Verardo R."/>
            <person name="Wei C.L."/>
            <person name="Yagi K."/>
            <person name="Yamanishi H."/>
            <person name="Zabarovsky E."/>
            <person name="Zhu S."/>
            <person name="Zimmer A."/>
            <person name="Hide W."/>
            <person name="Bult C."/>
            <person name="Grimmond S.M."/>
            <person name="Teasdale R.D."/>
            <person name="Liu E.T."/>
            <person name="Brusic V."/>
            <person name="Quackenbush J."/>
            <person name="Wahlestedt C."/>
            <person name="Mattick J.S."/>
            <person name="Hume D.A."/>
            <person name="Kai C."/>
            <person name="Sasaki D."/>
            <person name="Tomaru Y."/>
            <person name="Fukuda S."/>
            <person name="Kanamori-Katayama M."/>
            <person name="Suzuki M."/>
            <person name="Aoki J."/>
            <person name="Arakawa T."/>
            <person name="Iida J."/>
            <person name="Imamura K."/>
            <person name="Itoh M."/>
            <person name="Kato T."/>
            <person name="Kawaji H."/>
            <person name="Kawagashira N."/>
            <person name="Kawashima T."/>
            <person name="Kojima M."/>
            <person name="Kondo S."/>
            <person name="Konno H."/>
            <person name="Nakano K."/>
            <person name="Ninomiya N."/>
            <person name="Nishio T."/>
            <person name="Okada M."/>
            <person name="Plessy C."/>
            <person name="Shibata K."/>
            <person name="Shiraki T."/>
            <person name="Suzuki S."/>
            <person name="Tagami M."/>
            <person name="Waki K."/>
            <person name="Watahiki A."/>
            <person name="Okamura-Oho Y."/>
            <person name="Suzuki H."/>
            <person name="Kawai J."/>
            <person name="Hayashizaki Y."/>
        </authorList>
    </citation>
    <scope>NUCLEOTIDE SEQUENCE [LARGE SCALE MRNA] (ISOFORMS 1 AND 2)</scope>
    <source>
        <strain>C57BL/6J</strain>
        <strain>NOD</strain>
        <tissue>Corpora quadrigemina</tissue>
        <tissue>Diencephalon</tissue>
        <tissue>Heart</tissue>
        <tissue>Retina</tissue>
        <tissue>Thymus</tissue>
    </source>
</reference>
<reference key="2">
    <citation type="journal article" date="2004" name="Genome Res.">
        <title>The status, quality, and expansion of the NIH full-length cDNA project: the Mammalian Gene Collection (MGC).</title>
        <authorList>
            <consortium name="The MGC Project Team"/>
        </authorList>
    </citation>
    <scope>NUCLEOTIDE SEQUENCE [LARGE SCALE MRNA] (ISOFORM 1)</scope>
    <source>
        <tissue>Embryonic stem cell</tissue>
    </source>
</reference>
<reference key="3">
    <citation type="journal article" date="2010" name="Cell">
        <title>A tissue-specific atlas of mouse protein phosphorylation and expression.</title>
        <authorList>
            <person name="Huttlin E.L."/>
            <person name="Jedrychowski M.P."/>
            <person name="Elias J.E."/>
            <person name="Goswami T."/>
            <person name="Rad R."/>
            <person name="Beausoleil S.A."/>
            <person name="Villen J."/>
            <person name="Haas W."/>
            <person name="Sowa M.E."/>
            <person name="Gygi S.P."/>
        </authorList>
    </citation>
    <scope>IDENTIFICATION BY MASS SPECTROMETRY [LARGE SCALE ANALYSIS]</scope>
    <source>
        <tissue>Brain</tissue>
        <tissue>Heart</tissue>
        <tissue>Lung</tissue>
        <tissue>Spleen</tissue>
        <tissue>Testis</tissue>
    </source>
</reference>
<reference key="4">
    <citation type="journal article" date="2021" name="Nature">
        <title>SLC25A39 is necessary for mitochondrial glutathione import in mammalian cells.</title>
        <authorList>
            <person name="Wang Y."/>
            <person name="Yen F.S."/>
            <person name="Zhu X.G."/>
            <person name="Timson R.C."/>
            <person name="Weber R."/>
            <person name="Xing C."/>
            <person name="Liu Y."/>
            <person name="Allwein B."/>
            <person name="Luo H."/>
            <person name="Yeh H.W."/>
            <person name="Heissel S."/>
            <person name="Unlu G."/>
            <person name="Gamazon E.R."/>
            <person name="Kharas M.G."/>
            <person name="Hite R."/>
            <person name="Birsoy K."/>
        </authorList>
    </citation>
    <scope>FUNCTION</scope>
    <scope>DISRUPTION PHENOTYPE</scope>
</reference>
<sequence>MEPETEGPPPTIPVTPLQQMIASCTGAVLTSLMVTPLDVVKIRLQAQNNPFPKGKCFLYSNGLMDHMCVCEEESKKAWYKKPGNFRGTLDAFLKILRNEGIKSLWSGLPPTLVMAIPATVIYFTCYEQLSAFLKTKLGENETRIPIVAGVVARFGAVTVISPLELIRTKVQSKKFSYKELYQFVSMRVSEDGWISLWKGWAPTILRDVPFSAMYWYNYENLKRWLCEKSGLYEPTFMINFTSGALSGSFAAVATLPFDVVKTQKQTQLWTNEYCKFPAPLDMSTWTIMKNIVADKGFSGLFTGLIPRLVKIVPACAIMISSYELGKSFFQKQNVESR</sequence>
<proteinExistence type="evidence at protein level"/>
<keyword id="KW-0025">Alternative splicing</keyword>
<keyword id="KW-0472">Membrane</keyword>
<keyword id="KW-0496">Mitochondrion</keyword>
<keyword id="KW-0999">Mitochondrion inner membrane</keyword>
<keyword id="KW-1185">Reference proteome</keyword>
<keyword id="KW-0677">Repeat</keyword>
<keyword id="KW-0812">Transmembrane</keyword>
<keyword id="KW-1133">Transmembrane helix</keyword>
<keyword id="KW-0813">Transport</keyword>
<comment type="function">
    <text evidence="1 4">Probable mitochondrial transporter required for glutathione import into mitochondria. Glutathione, which plays key roles in oxidative metabolism, is produced exclusively in the cytosol and is imported in many organelles (By similarity). Mitochondrial glutathione is required for the activity and stability of proteins containing iron-sulfur clusters, as well as erythropoiesis (PubMed:34707288).</text>
</comment>
<comment type="catalytic activity">
    <reaction evidence="1">
        <text>glutathione(in) = glutathione(out)</text>
        <dbReference type="Rhea" id="RHEA:74819"/>
        <dbReference type="ChEBI" id="CHEBI:57925"/>
    </reaction>
</comment>
<comment type="subcellular location">
    <subcellularLocation>
        <location evidence="2">Mitochondrion inner membrane</location>
        <topology evidence="3">Multi-pass membrane protein</topology>
    </subcellularLocation>
</comment>
<comment type="alternative products">
    <event type="alternative splicing"/>
    <isoform>
        <id>Q8BGP6-1</id>
        <name>1</name>
        <sequence type="displayed"/>
    </isoform>
    <isoform>
        <id>Q8BGP6-2</id>
        <name>2</name>
        <sequence type="described" ref="VSP_026243"/>
    </isoform>
</comment>
<comment type="disruption phenotype">
    <text evidence="4">Cells lacking both Slc25a39 and Slc25a40 show defects in the activity and stability of proteins containing iron-sulfur clusters.</text>
</comment>
<comment type="similarity">
    <text evidence="7">Belongs to the mitochondrial carrier (TC 2.A.29) family.</text>
</comment>
<evidence type="ECO:0000250" key="1">
    <source>
        <dbReference type="UniProtKB" id="Q8TBP6"/>
    </source>
</evidence>
<evidence type="ECO:0000250" key="2">
    <source>
        <dbReference type="UniProtKB" id="Q9BZJ4"/>
    </source>
</evidence>
<evidence type="ECO:0000255" key="3"/>
<evidence type="ECO:0000269" key="4">
    <source>
    </source>
</evidence>
<evidence type="ECO:0000303" key="5">
    <source>
    </source>
</evidence>
<evidence type="ECO:0000303" key="6">
    <source>
    </source>
</evidence>
<evidence type="ECO:0000305" key="7"/>
<evidence type="ECO:0000312" key="8">
    <source>
        <dbReference type="MGI" id="MGI:2442486"/>
    </source>
</evidence>
<gene>
    <name evidence="6 8" type="primary">Slc25a40</name>
</gene>
<feature type="chain" id="PRO_0000291810" description="Mitochondrial glutathione transporter SLC25A40">
    <location>
        <begin position="1"/>
        <end position="337"/>
    </location>
</feature>
<feature type="transmembrane region" description="Helical; Name=1" evidence="3">
    <location>
        <begin position="20"/>
        <end position="40"/>
    </location>
</feature>
<feature type="transmembrane region" description="Helical; Name=2" evidence="3">
    <location>
        <begin position="104"/>
        <end position="124"/>
    </location>
</feature>
<feature type="transmembrane region" description="Helical; Name=3" evidence="3">
    <location>
        <begin position="146"/>
        <end position="166"/>
    </location>
</feature>
<feature type="transmembrane region" description="Helical; Name=4" evidence="3">
    <location>
        <begin position="200"/>
        <end position="221"/>
    </location>
</feature>
<feature type="transmembrane region" description="Helical; Name=5" evidence="3">
    <location>
        <begin position="240"/>
        <end position="260"/>
    </location>
</feature>
<feature type="transmembrane region" description="Helical; Name=6" evidence="3">
    <location>
        <begin position="299"/>
        <end position="319"/>
    </location>
</feature>
<feature type="repeat" description="Solcar 1">
    <location>
        <begin position="14"/>
        <end position="132"/>
    </location>
</feature>
<feature type="repeat" description="Solcar 2">
    <location>
        <begin position="140"/>
        <end position="224"/>
    </location>
</feature>
<feature type="repeat" description="Solcar 3">
    <location>
        <begin position="234"/>
        <end position="328"/>
    </location>
</feature>
<feature type="splice variant" id="VSP_026243" description="In isoform 2." evidence="5">
    <location>
        <begin position="1"/>
        <end position="63"/>
    </location>
</feature>
<feature type="sequence conflict" description="In Ref. 1; BAC31842." evidence="7" ref="1">
    <original>C</original>
    <variation>Y</variation>
    <location>
        <position position="24"/>
    </location>
</feature>
<feature type="sequence conflict" description="In Ref. 1; BAE23124." evidence="7" ref="1">
    <original>A</original>
    <variation>G</variation>
    <location>
        <position position="156"/>
    </location>
</feature>
<feature type="sequence conflict" description="In Ref. 1; BAE23124." evidence="7" ref="1">
    <original>F</original>
    <variation>L</variation>
    <location>
        <position position="183"/>
    </location>
</feature>
<name>S2540_MOUSE</name>
<protein>
    <recommendedName>
        <fullName evidence="7">Mitochondrial glutathione transporter SLC25A40</fullName>
    </recommendedName>
    <alternativeName>
        <fullName evidence="7">Solute carrier family 25 member 40</fullName>
    </alternativeName>
</protein>
<dbReference type="EMBL" id="AK044260">
    <property type="protein sequence ID" value="BAC31842.1"/>
    <property type="molecule type" value="mRNA"/>
</dbReference>
<dbReference type="EMBL" id="AK045863">
    <property type="protein sequence ID" value="BAC32513.1"/>
    <property type="molecule type" value="mRNA"/>
</dbReference>
<dbReference type="EMBL" id="AK084797">
    <property type="protein sequence ID" value="BAC39281.1"/>
    <property type="molecule type" value="mRNA"/>
</dbReference>
<dbReference type="EMBL" id="AK088444">
    <property type="protein sequence ID" value="BAC40356.1"/>
    <property type="molecule type" value="mRNA"/>
</dbReference>
<dbReference type="EMBL" id="AK136770">
    <property type="protein sequence ID" value="BAE23124.1"/>
    <property type="molecule type" value="mRNA"/>
</dbReference>
<dbReference type="EMBL" id="BC083103">
    <property type="protein sequence ID" value="AAH83103.1"/>
    <property type="molecule type" value="mRNA"/>
</dbReference>
<dbReference type="CCDS" id="CCDS39010.1">
    <molecule id="Q8BGP6-1"/>
</dbReference>
<dbReference type="RefSeq" id="NP_001276524.1">
    <molecule id="Q8BGP6-1"/>
    <property type="nucleotide sequence ID" value="NM_001289595.1"/>
</dbReference>
<dbReference type="RefSeq" id="NP_001276525.1">
    <molecule id="Q8BGP6-2"/>
    <property type="nucleotide sequence ID" value="NM_001289596.1"/>
</dbReference>
<dbReference type="RefSeq" id="NP_848881.2">
    <molecule id="Q8BGP6-1"/>
    <property type="nucleotide sequence ID" value="NM_178766.5"/>
</dbReference>
<dbReference type="RefSeq" id="XP_006503654.1">
    <molecule id="Q8BGP6-1"/>
    <property type="nucleotide sequence ID" value="XM_006503591.5"/>
</dbReference>
<dbReference type="RefSeq" id="XP_030110429.1">
    <molecule id="Q8BGP6-2"/>
    <property type="nucleotide sequence ID" value="XM_030254569.2"/>
</dbReference>
<dbReference type="SMR" id="Q8BGP6"/>
<dbReference type="BioGRID" id="235425">
    <property type="interactions" value="1"/>
</dbReference>
<dbReference type="FunCoup" id="Q8BGP6">
    <property type="interactions" value="2434"/>
</dbReference>
<dbReference type="STRING" id="10090.ENSMUSP00000067611"/>
<dbReference type="GlyGen" id="Q8BGP6">
    <property type="glycosylation" value="1 site, 1 O-linked glycan (1 site)"/>
</dbReference>
<dbReference type="PhosphoSitePlus" id="Q8BGP6"/>
<dbReference type="SwissPalm" id="Q8BGP6"/>
<dbReference type="jPOST" id="Q8BGP6"/>
<dbReference type="PaxDb" id="10090-ENSMUSP00000067611"/>
<dbReference type="PeptideAtlas" id="Q8BGP6"/>
<dbReference type="ProteomicsDB" id="256864">
    <molecule id="Q8BGP6-1"/>
</dbReference>
<dbReference type="ProteomicsDB" id="256865">
    <molecule id="Q8BGP6-2"/>
</dbReference>
<dbReference type="Pumba" id="Q8BGP6"/>
<dbReference type="Antibodypedia" id="29759">
    <property type="antibodies" value="35 antibodies from 10 providers"/>
</dbReference>
<dbReference type="DNASU" id="319653"/>
<dbReference type="Ensembl" id="ENSMUST00000066921.10">
    <molecule id="Q8BGP6-1"/>
    <property type="protein sequence ID" value="ENSMUSP00000067611.4"/>
    <property type="gene ID" value="ENSMUSG00000054099.12"/>
</dbReference>
<dbReference type="Ensembl" id="ENSMUST00000170496.6">
    <molecule id="Q8BGP6-1"/>
    <property type="protein sequence ID" value="ENSMUSP00000130630.2"/>
    <property type="gene ID" value="ENSMUSG00000054099.12"/>
</dbReference>
<dbReference type="GeneID" id="319653"/>
<dbReference type="KEGG" id="mmu:319653"/>
<dbReference type="UCSC" id="uc008wkf.3">
    <molecule id="Q8BGP6-1"/>
    <property type="organism name" value="mouse"/>
</dbReference>
<dbReference type="AGR" id="MGI:2442486"/>
<dbReference type="CTD" id="55972"/>
<dbReference type="MGI" id="MGI:2442486">
    <property type="gene designation" value="Slc25a40"/>
</dbReference>
<dbReference type="VEuPathDB" id="HostDB:ENSMUSG00000054099"/>
<dbReference type="eggNOG" id="KOG0761">
    <property type="taxonomic scope" value="Eukaryota"/>
</dbReference>
<dbReference type="GeneTree" id="ENSGT00940000160249"/>
<dbReference type="HOGENOM" id="CLU_015166_0_0_1"/>
<dbReference type="InParanoid" id="Q8BGP6"/>
<dbReference type="OMA" id="FVSPIEM"/>
<dbReference type="OrthoDB" id="1747031at2759"/>
<dbReference type="PhylomeDB" id="Q8BGP6"/>
<dbReference type="TreeFam" id="TF314720"/>
<dbReference type="BioGRID-ORCS" id="319653">
    <property type="hits" value="3 hits in 76 CRISPR screens"/>
</dbReference>
<dbReference type="PRO" id="PR:Q8BGP6"/>
<dbReference type="Proteomes" id="UP000000589">
    <property type="component" value="Chromosome 5"/>
</dbReference>
<dbReference type="RNAct" id="Q8BGP6">
    <property type="molecule type" value="protein"/>
</dbReference>
<dbReference type="Bgee" id="ENSMUSG00000054099">
    <property type="expression patterns" value="Expressed in paneth cell and 168 other cell types or tissues"/>
</dbReference>
<dbReference type="ExpressionAtlas" id="Q8BGP6">
    <property type="expression patterns" value="baseline and differential"/>
</dbReference>
<dbReference type="GO" id="GO:0005743">
    <property type="term" value="C:mitochondrial inner membrane"/>
    <property type="evidence" value="ECO:0007669"/>
    <property type="project" value="UniProtKB-SubCell"/>
</dbReference>
<dbReference type="GO" id="GO:0005739">
    <property type="term" value="C:mitochondrion"/>
    <property type="evidence" value="ECO:0007005"/>
    <property type="project" value="MGI"/>
</dbReference>
<dbReference type="GO" id="GO:0034634">
    <property type="term" value="F:glutathione transmembrane transporter activity"/>
    <property type="evidence" value="ECO:0000250"/>
    <property type="project" value="UniProtKB"/>
</dbReference>
<dbReference type="GO" id="GO:0048821">
    <property type="term" value="P:erythrocyte development"/>
    <property type="evidence" value="ECO:0000315"/>
    <property type="project" value="UniProtKB"/>
</dbReference>
<dbReference type="GO" id="GO:1990542">
    <property type="term" value="P:mitochondrial transmembrane transport"/>
    <property type="evidence" value="ECO:0007669"/>
    <property type="project" value="InterPro"/>
</dbReference>
<dbReference type="FunFam" id="1.50.40.10:FF:000141">
    <property type="entry name" value="Mitochondrial carrier protein MTM1"/>
    <property type="match status" value="1"/>
</dbReference>
<dbReference type="Gene3D" id="1.50.40.10">
    <property type="entry name" value="Mitochondrial carrier domain"/>
    <property type="match status" value="1"/>
</dbReference>
<dbReference type="InterPro" id="IPR002067">
    <property type="entry name" value="Mit_carrier"/>
</dbReference>
<dbReference type="InterPro" id="IPR018108">
    <property type="entry name" value="Mitochondrial_sb/sol_carrier"/>
</dbReference>
<dbReference type="InterPro" id="IPR023395">
    <property type="entry name" value="Mt_carrier_dom_sf"/>
</dbReference>
<dbReference type="InterPro" id="IPR045315">
    <property type="entry name" value="Mtm1-like"/>
</dbReference>
<dbReference type="PANTHER" id="PTHR45760">
    <property type="entry name" value="FI19922P1-RELATED"/>
    <property type="match status" value="1"/>
</dbReference>
<dbReference type="PANTHER" id="PTHR45760:SF5">
    <property type="entry name" value="MITOCHONDRIAL GLUTATHIONE TRANSPORTER SLC25A40-RELATED"/>
    <property type="match status" value="1"/>
</dbReference>
<dbReference type="Pfam" id="PF00153">
    <property type="entry name" value="Mito_carr"/>
    <property type="match status" value="3"/>
</dbReference>
<dbReference type="PRINTS" id="PR00926">
    <property type="entry name" value="MITOCARRIER"/>
</dbReference>
<dbReference type="SUPFAM" id="SSF103506">
    <property type="entry name" value="Mitochondrial carrier"/>
    <property type="match status" value="1"/>
</dbReference>
<dbReference type="PROSITE" id="PS50920">
    <property type="entry name" value="SOLCAR"/>
    <property type="match status" value="3"/>
</dbReference>
<organism>
    <name type="scientific">Mus musculus</name>
    <name type="common">Mouse</name>
    <dbReference type="NCBI Taxonomy" id="10090"/>
    <lineage>
        <taxon>Eukaryota</taxon>
        <taxon>Metazoa</taxon>
        <taxon>Chordata</taxon>
        <taxon>Craniata</taxon>
        <taxon>Vertebrata</taxon>
        <taxon>Euteleostomi</taxon>
        <taxon>Mammalia</taxon>
        <taxon>Eutheria</taxon>
        <taxon>Euarchontoglires</taxon>
        <taxon>Glires</taxon>
        <taxon>Rodentia</taxon>
        <taxon>Myomorpha</taxon>
        <taxon>Muroidea</taxon>
        <taxon>Muridae</taxon>
        <taxon>Murinae</taxon>
        <taxon>Mus</taxon>
        <taxon>Mus</taxon>
    </lineage>
</organism>
<accession>Q8BGP6</accession>
<accession>Q3UVZ5</accession>
<accession>Q8BXT8</accession>